<organism>
    <name type="scientific">Chlamydia pneumoniae</name>
    <name type="common">Chlamydophila pneumoniae</name>
    <dbReference type="NCBI Taxonomy" id="83558"/>
    <lineage>
        <taxon>Bacteria</taxon>
        <taxon>Pseudomonadati</taxon>
        <taxon>Chlamydiota</taxon>
        <taxon>Chlamydiia</taxon>
        <taxon>Chlamydiales</taxon>
        <taxon>Chlamydiaceae</taxon>
        <taxon>Chlamydia/Chlamydophila group</taxon>
        <taxon>Chlamydia</taxon>
    </lineage>
</organism>
<evidence type="ECO:0000255" key="1"/>
<evidence type="ECO:0000305" key="2"/>
<name>Y347_CHLPN</name>
<keyword id="KW-0997">Cell inner membrane</keyword>
<keyword id="KW-1003">Cell membrane</keyword>
<keyword id="KW-0472">Membrane</keyword>
<keyword id="KW-0812">Transmembrane</keyword>
<keyword id="KW-1133">Transmembrane helix</keyword>
<keyword id="KW-0813">Transport</keyword>
<proteinExistence type="inferred from homology"/>
<gene>
    <name type="ordered locus">CPn_0347</name>
    <name type="ordered locus">CP_0413</name>
    <name type="ordered locus">CPj0347</name>
    <name type="ordered locus">CpB0354</name>
</gene>
<feature type="chain" id="PRO_0000171164" description="Probable metal transport system membrane protein CPn_0347/CP_0413/CPj0347/CpB0354">
    <location>
        <begin position="1"/>
        <end position="448"/>
    </location>
</feature>
<feature type="transmembrane region" description="Helical" evidence="1">
    <location>
        <begin position="15"/>
        <end position="35"/>
    </location>
</feature>
<feature type="transmembrane region" description="Helical" evidence="1">
    <location>
        <begin position="47"/>
        <end position="67"/>
    </location>
</feature>
<feature type="transmembrane region" description="Helical" evidence="1">
    <location>
        <begin position="69"/>
        <end position="89"/>
    </location>
</feature>
<feature type="transmembrane region" description="Helical" evidence="1">
    <location>
        <begin position="100"/>
        <end position="120"/>
    </location>
</feature>
<feature type="transmembrane region" description="Helical" evidence="1">
    <location>
        <begin position="144"/>
        <end position="164"/>
    </location>
</feature>
<feature type="transmembrane region" description="Helical" evidence="1">
    <location>
        <begin position="193"/>
        <end position="213"/>
    </location>
</feature>
<feature type="transmembrane region" description="Helical" evidence="1">
    <location>
        <begin position="233"/>
        <end position="253"/>
    </location>
</feature>
<feature type="transmembrane region" description="Helical" evidence="1">
    <location>
        <begin position="270"/>
        <end position="290"/>
    </location>
</feature>
<protein>
    <recommendedName>
        <fullName>Probable metal transport system membrane protein CPn_0347/CP_0413/CPj0347/CpB0354</fullName>
    </recommendedName>
</protein>
<dbReference type="EMBL" id="AE001363">
    <property type="protein sequence ID" value="AAD18491.1"/>
    <property type="molecule type" value="Genomic_DNA"/>
</dbReference>
<dbReference type="EMBL" id="AE002161">
    <property type="protein sequence ID" value="AAF38257.1"/>
    <property type="status" value="ALT_INIT"/>
    <property type="molecule type" value="Genomic_DNA"/>
</dbReference>
<dbReference type="EMBL" id="BA000008">
    <property type="protein sequence ID" value="BAA98555.1"/>
    <property type="molecule type" value="Genomic_DNA"/>
</dbReference>
<dbReference type="EMBL" id="AE009440">
    <property type="protein sequence ID" value="AAP98285.1"/>
    <property type="status" value="ALT_INIT"/>
    <property type="molecule type" value="Genomic_DNA"/>
</dbReference>
<dbReference type="PIR" id="A72089">
    <property type="entry name" value="A72089"/>
</dbReference>
<dbReference type="PIR" id="A81581">
    <property type="entry name" value="A81581"/>
</dbReference>
<dbReference type="PIR" id="A86534">
    <property type="entry name" value="A86534"/>
</dbReference>
<dbReference type="RefSeq" id="NP_224547.1">
    <property type="nucleotide sequence ID" value="NC_000922.1"/>
</dbReference>
<dbReference type="RefSeq" id="WP_010882990.1">
    <property type="nucleotide sequence ID" value="NZ_LN847257.1"/>
</dbReference>
<dbReference type="SMR" id="Q9Z8J6"/>
<dbReference type="STRING" id="406984.CPK_ORF00854"/>
<dbReference type="GeneID" id="45050392"/>
<dbReference type="KEGG" id="cpa:CP_0413"/>
<dbReference type="KEGG" id="cpj:ytgC"/>
<dbReference type="KEGG" id="cpn:CPn_0347"/>
<dbReference type="KEGG" id="cpt:CpB0354"/>
<dbReference type="PATRIC" id="fig|115713.3.peg.383"/>
<dbReference type="eggNOG" id="COG1108">
    <property type="taxonomic scope" value="Bacteria"/>
</dbReference>
<dbReference type="eggNOG" id="COG1321">
    <property type="taxonomic scope" value="Bacteria"/>
</dbReference>
<dbReference type="HOGENOM" id="CLU_028808_0_2_0"/>
<dbReference type="OrthoDB" id="9798540at2"/>
<dbReference type="Proteomes" id="UP000000583">
    <property type="component" value="Chromosome"/>
</dbReference>
<dbReference type="Proteomes" id="UP000000801">
    <property type="component" value="Chromosome"/>
</dbReference>
<dbReference type="GO" id="GO:0043190">
    <property type="term" value="C:ATP-binding cassette (ABC) transporter complex"/>
    <property type="evidence" value="ECO:0007669"/>
    <property type="project" value="InterPro"/>
</dbReference>
<dbReference type="GO" id="GO:0003700">
    <property type="term" value="F:DNA-binding transcription factor activity"/>
    <property type="evidence" value="ECO:0007669"/>
    <property type="project" value="InterPro"/>
</dbReference>
<dbReference type="GO" id="GO:0046983">
    <property type="term" value="F:protein dimerization activity"/>
    <property type="evidence" value="ECO:0007669"/>
    <property type="project" value="InterPro"/>
</dbReference>
<dbReference type="GO" id="GO:0046914">
    <property type="term" value="F:transition metal ion binding"/>
    <property type="evidence" value="ECO:0007669"/>
    <property type="project" value="InterPro"/>
</dbReference>
<dbReference type="GO" id="GO:0010043">
    <property type="term" value="P:response to zinc ion"/>
    <property type="evidence" value="ECO:0007669"/>
    <property type="project" value="TreeGrafter"/>
</dbReference>
<dbReference type="GO" id="GO:0055085">
    <property type="term" value="P:transmembrane transport"/>
    <property type="evidence" value="ECO:0007669"/>
    <property type="project" value="InterPro"/>
</dbReference>
<dbReference type="CDD" id="cd06550">
    <property type="entry name" value="TM_ABC_iron-siderophores_like"/>
    <property type="match status" value="1"/>
</dbReference>
<dbReference type="Gene3D" id="1.10.3470.10">
    <property type="entry name" value="ABC transporter involved in vitamin B12 uptake, BtuC"/>
    <property type="match status" value="1"/>
</dbReference>
<dbReference type="Gene3D" id="1.10.10.10">
    <property type="entry name" value="Winged helix-like DNA-binding domain superfamily/Winged helix DNA-binding domain"/>
    <property type="match status" value="1"/>
</dbReference>
<dbReference type="InterPro" id="IPR037294">
    <property type="entry name" value="ABC_BtuC-like"/>
</dbReference>
<dbReference type="InterPro" id="IPR001626">
    <property type="entry name" value="ABC_TroCD"/>
</dbReference>
<dbReference type="InterPro" id="IPR001367">
    <property type="entry name" value="Fe_dep_repressor"/>
</dbReference>
<dbReference type="InterPro" id="IPR036421">
    <property type="entry name" value="Fe_dep_repressor_sf"/>
</dbReference>
<dbReference type="InterPro" id="IPR022689">
    <property type="entry name" value="Iron_dep_repressor"/>
</dbReference>
<dbReference type="InterPro" id="IPR036388">
    <property type="entry name" value="WH-like_DNA-bd_sf"/>
</dbReference>
<dbReference type="PANTHER" id="PTHR30477">
    <property type="entry name" value="ABC-TRANSPORTER METAL-BINDING PROTEIN"/>
    <property type="match status" value="1"/>
</dbReference>
<dbReference type="PANTHER" id="PTHR30477:SF3">
    <property type="entry name" value="METAL TRANSPORT SYSTEM MEMBRANE PROTEIN CT_069-RELATED"/>
    <property type="match status" value="1"/>
</dbReference>
<dbReference type="Pfam" id="PF00950">
    <property type="entry name" value="ABC-3"/>
    <property type="match status" value="1"/>
</dbReference>
<dbReference type="Pfam" id="PF02742">
    <property type="entry name" value="Fe_dep_repr_C"/>
    <property type="match status" value="1"/>
</dbReference>
<dbReference type="SMART" id="SM00529">
    <property type="entry name" value="HTH_DTXR"/>
    <property type="match status" value="1"/>
</dbReference>
<dbReference type="SUPFAM" id="SSF81345">
    <property type="entry name" value="ABC transporter involved in vitamin B12 uptake, BtuC"/>
    <property type="match status" value="1"/>
</dbReference>
<dbReference type="SUPFAM" id="SSF47979">
    <property type="entry name" value="Iron-dependent repressor protein, dimerization domain"/>
    <property type="match status" value="1"/>
</dbReference>
<comment type="function">
    <text>Part of an ATP-driven transport system CPn_0346/CPn_0347/CPn_0348/CPn_0349 for a metal.</text>
</comment>
<comment type="subcellular location">
    <subcellularLocation>
        <location evidence="2">Cell inner membrane</location>
        <topology evidence="2">Multi-pass membrane protein</topology>
    </subcellularLocation>
</comment>
<comment type="similarity">
    <text evidence="2">Belongs to the ABC-3 integral membrane protein family.</text>
</comment>
<comment type="sequence caution" evidence="2">
    <conflict type="erroneous initiation">
        <sequence resource="EMBL-CDS" id="AAF38257"/>
    </conflict>
</comment>
<comment type="sequence caution" evidence="2">
    <conflict type="erroneous initiation">
        <sequence resource="EMBL-CDS" id="AAP98285"/>
    </conflict>
</comment>
<accession>Q9Z8J6</accession>
<accession>Q9K277</accession>
<sequence length="448" mass="50300">MLSCVFSDTIFLSSFLAVTLICMTTALWGTILLISKQPLLSESLSHASYPGLLVGALMAQYVFSLQASIFWIVLFGCAASVFGYGIIVFLGKVCKLHKDSALCFVLVVFFAIGVILASYVKESSPTLYNRINAYLYGQAATLGFLEATLAAIVFCASLFALWWWYRQIVVTTFDKDFAVTCGLKTVLYEALSLIFISLVIVSGVRSVGIVLISAMFVAPSLGARQLSDRLSTILILSAFFGGISGALGSYISVAFTCRAIIGQQAVPVTLPTGPLVVICAGLLAGLCLLFSPKSGWVIRFVRRKHFSFSKDQEHLLKVFWHISHNRLENISVRDFVCSYKYQEYFGPKPFPRWRVQILEWRGYVKKEQDYYRLTKKGRSEALRLVRAHRLWESYLVNSLDFSKESVHELAEEIEHVLTEELDHTLTEILNDPCYDPHRQIIPNKKKEV</sequence>
<reference key="1">
    <citation type="journal article" date="1999" name="Nat. Genet.">
        <title>Comparative genomes of Chlamydia pneumoniae and C. trachomatis.</title>
        <authorList>
            <person name="Kalman S."/>
            <person name="Mitchell W.P."/>
            <person name="Marathe R."/>
            <person name="Lammel C.J."/>
            <person name="Fan J."/>
            <person name="Hyman R.W."/>
            <person name="Olinger L."/>
            <person name="Grimwood J."/>
            <person name="Davis R.W."/>
            <person name="Stephens R.S."/>
        </authorList>
    </citation>
    <scope>NUCLEOTIDE SEQUENCE [LARGE SCALE GENOMIC DNA]</scope>
    <source>
        <strain>CWL029</strain>
    </source>
</reference>
<reference key="2">
    <citation type="journal article" date="2000" name="Nucleic Acids Res.">
        <title>Genome sequences of Chlamydia trachomatis MoPn and Chlamydia pneumoniae AR39.</title>
        <authorList>
            <person name="Read T.D."/>
            <person name="Brunham R.C."/>
            <person name="Shen C."/>
            <person name="Gill S.R."/>
            <person name="Heidelberg J.F."/>
            <person name="White O."/>
            <person name="Hickey E.K."/>
            <person name="Peterson J.D."/>
            <person name="Utterback T.R."/>
            <person name="Berry K.J."/>
            <person name="Bass S."/>
            <person name="Linher K.D."/>
            <person name="Weidman J.F."/>
            <person name="Khouri H.M."/>
            <person name="Craven B."/>
            <person name="Bowman C."/>
            <person name="Dodson R.J."/>
            <person name="Gwinn M.L."/>
            <person name="Nelson W.C."/>
            <person name="DeBoy R.T."/>
            <person name="Kolonay J.F."/>
            <person name="McClarty G."/>
            <person name="Salzberg S.L."/>
            <person name="Eisen J.A."/>
            <person name="Fraser C.M."/>
        </authorList>
    </citation>
    <scope>NUCLEOTIDE SEQUENCE [LARGE SCALE GENOMIC DNA]</scope>
    <source>
        <strain>AR39</strain>
    </source>
</reference>
<reference key="3">
    <citation type="journal article" date="2000" name="Nucleic Acids Res.">
        <title>Comparison of whole genome sequences of Chlamydia pneumoniae J138 from Japan and CWL029 from USA.</title>
        <authorList>
            <person name="Shirai M."/>
            <person name="Hirakawa H."/>
            <person name="Kimoto M."/>
            <person name="Tabuchi M."/>
            <person name="Kishi F."/>
            <person name="Ouchi K."/>
            <person name="Shiba T."/>
            <person name="Ishii K."/>
            <person name="Hattori M."/>
            <person name="Kuhara S."/>
            <person name="Nakazawa T."/>
        </authorList>
    </citation>
    <scope>NUCLEOTIDE SEQUENCE [LARGE SCALE GENOMIC DNA]</scope>
    <source>
        <strain>J138</strain>
    </source>
</reference>
<reference key="4">
    <citation type="submission" date="2002-05" db="EMBL/GenBank/DDBJ databases">
        <title>The genome sequence of Chlamydia pneumoniae TW183 and comparison with other Chlamydia strains based on whole genome sequence analysis.</title>
        <authorList>
            <person name="Geng M.M."/>
            <person name="Schuhmacher A."/>
            <person name="Muehldorfer I."/>
            <person name="Bensch K.W."/>
            <person name="Schaefer K.P."/>
            <person name="Schneider S."/>
            <person name="Pohl T."/>
            <person name="Essig A."/>
            <person name="Marre R."/>
            <person name="Melchers K."/>
        </authorList>
    </citation>
    <scope>NUCLEOTIDE SEQUENCE [LARGE SCALE GENOMIC DNA]</scope>
    <source>
        <strain>TW-183</strain>
    </source>
</reference>